<accession>Q49YA6</accession>
<keyword id="KW-0067">ATP-binding</keyword>
<keyword id="KW-0143">Chaperone</keyword>
<keyword id="KW-0479">Metal-binding</keyword>
<keyword id="KW-0547">Nucleotide-binding</keyword>
<keyword id="KW-1185">Reference proteome</keyword>
<keyword id="KW-0862">Zinc</keyword>
<protein>
    <recommendedName>
        <fullName evidence="1">ATP-dependent Clp protease ATP-binding subunit ClpX</fullName>
    </recommendedName>
</protein>
<organism>
    <name type="scientific">Staphylococcus saprophyticus subsp. saprophyticus (strain ATCC 15305 / DSM 20229 / NCIMB 8711 / NCTC 7292 / S-41)</name>
    <dbReference type="NCBI Taxonomy" id="342451"/>
    <lineage>
        <taxon>Bacteria</taxon>
        <taxon>Bacillati</taxon>
        <taxon>Bacillota</taxon>
        <taxon>Bacilli</taxon>
        <taxon>Bacillales</taxon>
        <taxon>Staphylococcaceae</taxon>
        <taxon>Staphylococcus</taxon>
    </lineage>
</organism>
<feature type="chain" id="PRO_1000024675" description="ATP-dependent Clp protease ATP-binding subunit ClpX">
    <location>
        <begin position="1"/>
        <end position="420"/>
    </location>
</feature>
<feature type="domain" description="ClpX-type ZB" evidence="2">
    <location>
        <begin position="1"/>
        <end position="54"/>
    </location>
</feature>
<feature type="binding site" evidence="2">
    <location>
        <position position="13"/>
    </location>
    <ligand>
        <name>Zn(2+)</name>
        <dbReference type="ChEBI" id="CHEBI:29105"/>
    </ligand>
</feature>
<feature type="binding site" evidence="2">
    <location>
        <position position="16"/>
    </location>
    <ligand>
        <name>Zn(2+)</name>
        <dbReference type="ChEBI" id="CHEBI:29105"/>
    </ligand>
</feature>
<feature type="binding site" evidence="2">
    <location>
        <position position="35"/>
    </location>
    <ligand>
        <name>Zn(2+)</name>
        <dbReference type="ChEBI" id="CHEBI:29105"/>
    </ligand>
</feature>
<feature type="binding site" evidence="2">
    <location>
        <position position="38"/>
    </location>
    <ligand>
        <name>Zn(2+)</name>
        <dbReference type="ChEBI" id="CHEBI:29105"/>
    </ligand>
</feature>
<feature type="binding site" evidence="1">
    <location>
        <begin position="118"/>
        <end position="125"/>
    </location>
    <ligand>
        <name>ATP</name>
        <dbReference type="ChEBI" id="CHEBI:30616"/>
    </ligand>
</feature>
<evidence type="ECO:0000255" key="1">
    <source>
        <dbReference type="HAMAP-Rule" id="MF_00175"/>
    </source>
</evidence>
<evidence type="ECO:0000255" key="2">
    <source>
        <dbReference type="PROSITE-ProRule" id="PRU01250"/>
    </source>
</evidence>
<sequence>MFKFNEDEENLKCSFCGKDQDQVKKLVAGSGVYICNECIELCSEIVEEELAQSEPEGLTELPTPKEIMDKLNDYVIGQEKAKKSLAVAVYNHYKRVQQLGPNEDEVELQKSNVALIGPTGSGKTLLAQTLAKTLNVPFAIADATSLTEAGYVGDDVENILLRLIQAADFDIDKAEKGIIYVDEIDKIARKSENTSITRDVSGEGVQQALLKILEGTTASVPPQGGRKHPNQELIQIDTTNILFVLGGAFDGIDEVIKRRLGEKVIGFSSSEASKYDEDAILEQIRPEDLQSYGLIPEFIGRVPIVANLETLDVDALKNILTQPKNALVKQYTKMLELDDVTLEFTDEALSAISNKAIKRKTGARGLRSIIEEALIDIMYDVPSSDGVVKVVITAETINDEKEPELYDKDGNLVNKEQTSA</sequence>
<proteinExistence type="inferred from homology"/>
<reference key="1">
    <citation type="journal article" date="2005" name="Proc. Natl. Acad. Sci. U.S.A.">
        <title>Whole genome sequence of Staphylococcus saprophyticus reveals the pathogenesis of uncomplicated urinary tract infection.</title>
        <authorList>
            <person name="Kuroda M."/>
            <person name="Yamashita A."/>
            <person name="Hirakawa H."/>
            <person name="Kumano M."/>
            <person name="Morikawa K."/>
            <person name="Higashide M."/>
            <person name="Maruyama A."/>
            <person name="Inose Y."/>
            <person name="Matoba K."/>
            <person name="Toh H."/>
            <person name="Kuhara S."/>
            <person name="Hattori M."/>
            <person name="Ohta T."/>
        </authorList>
    </citation>
    <scope>NUCLEOTIDE SEQUENCE [LARGE SCALE GENOMIC DNA]</scope>
    <source>
        <strain>ATCC 15305 / DSM 20229 / NCIMB 8711 / NCTC 7292 / S-41</strain>
    </source>
</reference>
<comment type="function">
    <text evidence="1">ATP-dependent specificity component of the Clp protease. It directs the protease to specific substrates. Can perform chaperone functions in the absence of ClpP.</text>
</comment>
<comment type="subunit">
    <text evidence="1">Component of the ClpX-ClpP complex. Forms a hexameric ring that, in the presence of ATP, binds to fourteen ClpP subunits assembled into a disk-like structure with a central cavity, resembling the structure of eukaryotic proteasomes.</text>
</comment>
<comment type="similarity">
    <text evidence="1">Belongs to the ClpX chaperone family.</text>
</comment>
<dbReference type="EMBL" id="AP008934">
    <property type="protein sequence ID" value="BAE18235.1"/>
    <property type="molecule type" value="Genomic_DNA"/>
</dbReference>
<dbReference type="RefSeq" id="WP_011302926.1">
    <property type="nucleotide sequence ID" value="NC_007350.1"/>
</dbReference>
<dbReference type="SMR" id="Q49YA6"/>
<dbReference type="GeneID" id="3614932"/>
<dbReference type="KEGG" id="ssp:SSP1090"/>
<dbReference type="PATRIC" id="fig|342451.11.peg.1089"/>
<dbReference type="eggNOG" id="COG1219">
    <property type="taxonomic scope" value="Bacteria"/>
</dbReference>
<dbReference type="HOGENOM" id="CLU_014218_8_2_9"/>
<dbReference type="OrthoDB" id="9804062at2"/>
<dbReference type="Proteomes" id="UP000006371">
    <property type="component" value="Chromosome"/>
</dbReference>
<dbReference type="GO" id="GO:0009376">
    <property type="term" value="C:HslUV protease complex"/>
    <property type="evidence" value="ECO:0007669"/>
    <property type="project" value="TreeGrafter"/>
</dbReference>
<dbReference type="GO" id="GO:0005524">
    <property type="term" value="F:ATP binding"/>
    <property type="evidence" value="ECO:0007669"/>
    <property type="project" value="UniProtKB-UniRule"/>
</dbReference>
<dbReference type="GO" id="GO:0016887">
    <property type="term" value="F:ATP hydrolysis activity"/>
    <property type="evidence" value="ECO:0007669"/>
    <property type="project" value="InterPro"/>
</dbReference>
<dbReference type="GO" id="GO:0140662">
    <property type="term" value="F:ATP-dependent protein folding chaperone"/>
    <property type="evidence" value="ECO:0007669"/>
    <property type="project" value="InterPro"/>
</dbReference>
<dbReference type="GO" id="GO:0046983">
    <property type="term" value="F:protein dimerization activity"/>
    <property type="evidence" value="ECO:0007669"/>
    <property type="project" value="InterPro"/>
</dbReference>
<dbReference type="GO" id="GO:0051082">
    <property type="term" value="F:unfolded protein binding"/>
    <property type="evidence" value="ECO:0007669"/>
    <property type="project" value="UniProtKB-UniRule"/>
</dbReference>
<dbReference type="GO" id="GO:0008270">
    <property type="term" value="F:zinc ion binding"/>
    <property type="evidence" value="ECO:0007669"/>
    <property type="project" value="InterPro"/>
</dbReference>
<dbReference type="GO" id="GO:0051301">
    <property type="term" value="P:cell division"/>
    <property type="evidence" value="ECO:0007669"/>
    <property type="project" value="TreeGrafter"/>
</dbReference>
<dbReference type="GO" id="GO:0051603">
    <property type="term" value="P:proteolysis involved in protein catabolic process"/>
    <property type="evidence" value="ECO:0007669"/>
    <property type="project" value="TreeGrafter"/>
</dbReference>
<dbReference type="CDD" id="cd19497">
    <property type="entry name" value="RecA-like_ClpX"/>
    <property type="match status" value="1"/>
</dbReference>
<dbReference type="FunFam" id="1.10.8.60:FF:000002">
    <property type="entry name" value="ATP-dependent Clp protease ATP-binding subunit ClpX"/>
    <property type="match status" value="1"/>
</dbReference>
<dbReference type="FunFam" id="3.40.50.300:FF:000005">
    <property type="entry name" value="ATP-dependent Clp protease ATP-binding subunit ClpX"/>
    <property type="match status" value="1"/>
</dbReference>
<dbReference type="Gene3D" id="1.10.8.60">
    <property type="match status" value="1"/>
</dbReference>
<dbReference type="Gene3D" id="6.20.220.10">
    <property type="entry name" value="ClpX chaperone, C4-type zinc finger domain"/>
    <property type="match status" value="1"/>
</dbReference>
<dbReference type="Gene3D" id="3.40.50.300">
    <property type="entry name" value="P-loop containing nucleotide triphosphate hydrolases"/>
    <property type="match status" value="1"/>
</dbReference>
<dbReference type="HAMAP" id="MF_00175">
    <property type="entry name" value="ClpX"/>
    <property type="match status" value="1"/>
</dbReference>
<dbReference type="InterPro" id="IPR003593">
    <property type="entry name" value="AAA+_ATPase"/>
</dbReference>
<dbReference type="InterPro" id="IPR050052">
    <property type="entry name" value="ATP-dep_Clp_protease_ClpX"/>
</dbReference>
<dbReference type="InterPro" id="IPR003959">
    <property type="entry name" value="ATPase_AAA_core"/>
</dbReference>
<dbReference type="InterPro" id="IPR019489">
    <property type="entry name" value="Clp_ATPase_C"/>
</dbReference>
<dbReference type="InterPro" id="IPR004487">
    <property type="entry name" value="Clp_protease_ATP-bd_su_ClpX"/>
</dbReference>
<dbReference type="InterPro" id="IPR046425">
    <property type="entry name" value="ClpX_bact"/>
</dbReference>
<dbReference type="InterPro" id="IPR027417">
    <property type="entry name" value="P-loop_NTPase"/>
</dbReference>
<dbReference type="InterPro" id="IPR010603">
    <property type="entry name" value="Znf_CppX_C4"/>
</dbReference>
<dbReference type="InterPro" id="IPR038366">
    <property type="entry name" value="Znf_CppX_C4_sf"/>
</dbReference>
<dbReference type="NCBIfam" id="TIGR00382">
    <property type="entry name" value="clpX"/>
    <property type="match status" value="1"/>
</dbReference>
<dbReference type="NCBIfam" id="NF003745">
    <property type="entry name" value="PRK05342.1"/>
    <property type="match status" value="1"/>
</dbReference>
<dbReference type="PANTHER" id="PTHR48102:SF7">
    <property type="entry name" value="ATP-DEPENDENT CLP PROTEASE ATP-BINDING SUBUNIT CLPX-LIKE, MITOCHONDRIAL"/>
    <property type="match status" value="1"/>
</dbReference>
<dbReference type="PANTHER" id="PTHR48102">
    <property type="entry name" value="ATP-DEPENDENT CLP PROTEASE ATP-BINDING SUBUNIT CLPX-LIKE, MITOCHONDRIAL-RELATED"/>
    <property type="match status" value="1"/>
</dbReference>
<dbReference type="Pfam" id="PF07724">
    <property type="entry name" value="AAA_2"/>
    <property type="match status" value="1"/>
</dbReference>
<dbReference type="Pfam" id="PF10431">
    <property type="entry name" value="ClpB_D2-small"/>
    <property type="match status" value="1"/>
</dbReference>
<dbReference type="Pfam" id="PF06689">
    <property type="entry name" value="zf-C4_ClpX"/>
    <property type="match status" value="1"/>
</dbReference>
<dbReference type="SMART" id="SM00382">
    <property type="entry name" value="AAA"/>
    <property type="match status" value="1"/>
</dbReference>
<dbReference type="SMART" id="SM01086">
    <property type="entry name" value="ClpB_D2-small"/>
    <property type="match status" value="1"/>
</dbReference>
<dbReference type="SMART" id="SM00994">
    <property type="entry name" value="zf-C4_ClpX"/>
    <property type="match status" value="1"/>
</dbReference>
<dbReference type="SUPFAM" id="SSF57716">
    <property type="entry name" value="Glucocorticoid receptor-like (DNA-binding domain)"/>
    <property type="match status" value="1"/>
</dbReference>
<dbReference type="SUPFAM" id="SSF52540">
    <property type="entry name" value="P-loop containing nucleoside triphosphate hydrolases"/>
    <property type="match status" value="1"/>
</dbReference>
<dbReference type="PROSITE" id="PS51902">
    <property type="entry name" value="CLPX_ZB"/>
    <property type="match status" value="1"/>
</dbReference>
<name>CLPX_STAS1</name>
<gene>
    <name evidence="1" type="primary">clpX</name>
    <name type="ordered locus">SSP1090</name>
</gene>